<reference key="1">
    <citation type="journal article" date="1990" name="Proc. Natl. Acad. Sci. U.S.A.">
        <title>Glyoxysomal malate dehydrogenase from watermelon is synthesized with an amino-terminal transit peptide.</title>
        <authorList>
            <person name="Gietl C."/>
        </authorList>
    </citation>
    <scope>NUCLEOTIDE SEQUENCE [MRNA]</scope>
    <scope>PARTIAL PROTEIN SEQUENCE</scope>
    <source>
        <strain>cv. Sugar Baby</strain>
    </source>
</reference>
<reference key="2">
    <citation type="journal article" date="1986" name="Planta">
        <title>Sequence homologies between glyoxysomal and mitochondrial malate dehydrogenase.</title>
        <authorList>
            <person name="Gietl C."/>
            <person name="Lottspeich F."/>
            <person name="Hock B."/>
        </authorList>
    </citation>
    <scope>PROTEIN SEQUENCE OF 37-65</scope>
</reference>
<reference key="3">
    <citation type="journal article" date="2005" name="FEBS J.">
        <title>Organelle and translocatable forms of glyoxysomal malate dehydrogenase. The effect of the N-terminal presequence.</title>
        <authorList>
            <person name="Cox B."/>
            <person name="Chit M.M."/>
            <person name="Weaver T."/>
            <person name="Gietl C."/>
            <person name="Bailey J."/>
            <person name="Bell E."/>
            <person name="Banaszak L."/>
        </authorList>
    </citation>
    <scope>PROTEIN SEQUENCE OF N-TERMINUS</scope>
    <scope>X-RAY CRYSTALLOGRAPHY (2.50 ANGSTROMS) IN COMPLEX WITH SUBSTRATE ANALOG</scope>
    <scope>BIOPHYSICOCHEMICAL PROPERTIES</scope>
    <scope>SUBUNIT</scope>
    <scope>IDENTIFICATION BY MASS SPECTROMETRY</scope>
</reference>
<protein>
    <recommendedName>
        <fullName>Malate dehydrogenase, glyoxysomal</fullName>
        <ecNumber>1.1.1.37</ecNumber>
    </recommendedName>
</protein>
<sequence>MQPIPDVNQRIARISAHLHPPKSQMEESSALRRANCRAKGGAPGFKVAILGAAGGIGQPLAMLMKMNPLVSVLHLYDVVNAPGVTADISHMDTGAVVRGFLGQQQLEAALTGMDLIIVPAGVPRKPGMTRDDLFKINAGIVKTLCEGIAKCCPRAIVNLISNPVNSTVPIAAEVFKKAGTYDPKRLLGVTMLDVVRANTFVAEVLGLDPRDVDVPVVGGHAGVTILPLLSQVKPPSSFTQEEISYLTDRIQNGGTEVVEAKAGAGSATLSMAYAAVKFADACLRGLRGDAGVIECAFVSSQVTELPFFASKVRLGRNGIEEVYSLGPLNEYERIGLEKAKKELAGSIEKGVSFIRS</sequence>
<comment type="catalytic activity">
    <reaction evidence="2">
        <text>(S)-malate + NAD(+) = oxaloacetate + NADH + H(+)</text>
        <dbReference type="Rhea" id="RHEA:21432"/>
        <dbReference type="ChEBI" id="CHEBI:15378"/>
        <dbReference type="ChEBI" id="CHEBI:15589"/>
        <dbReference type="ChEBI" id="CHEBI:16452"/>
        <dbReference type="ChEBI" id="CHEBI:57540"/>
        <dbReference type="ChEBI" id="CHEBI:57945"/>
        <dbReference type="EC" id="1.1.1.37"/>
    </reaction>
</comment>
<comment type="biophysicochemical properties">
    <kinetics>
        <KM>146 uM for NADH</KM>
        <KM>76 mM for oxaloacetate</KM>
    </kinetics>
</comment>
<comment type="subunit">
    <text evidence="3">Homodimer.</text>
</comment>
<comment type="subcellular location">
    <subcellularLocation>
        <location>Glyoxysome</location>
    </subcellularLocation>
</comment>
<comment type="similarity">
    <text evidence="5">Belongs to the LDH/MDH superfamily. MDH type 1 family.</text>
</comment>
<evidence type="ECO:0000250" key="1"/>
<evidence type="ECO:0000255" key="2">
    <source>
        <dbReference type="PROSITE-ProRule" id="PRU10004"/>
    </source>
</evidence>
<evidence type="ECO:0000269" key="3">
    <source>
    </source>
</evidence>
<evidence type="ECO:0000269" key="4">
    <source ref="2"/>
</evidence>
<evidence type="ECO:0000305" key="5"/>
<evidence type="ECO:0007829" key="6">
    <source>
        <dbReference type="PDB" id="1SMK"/>
    </source>
</evidence>
<dbReference type="EC" id="1.1.1.37"/>
<dbReference type="EMBL" id="M33148">
    <property type="protein sequence ID" value="AAA33041.1"/>
    <property type="molecule type" value="mRNA"/>
</dbReference>
<dbReference type="PIR" id="A35957">
    <property type="entry name" value="DEPUGW"/>
</dbReference>
<dbReference type="PDB" id="1SEV">
    <property type="method" value="X-ray"/>
    <property type="resolution" value="2.55 A"/>
    <property type="chains" value="A/B=1-356"/>
</dbReference>
<dbReference type="PDB" id="1SMK">
    <property type="method" value="X-ray"/>
    <property type="resolution" value="2.50 A"/>
    <property type="chains" value="A/B/C/D/E/F/G/H=37-356"/>
</dbReference>
<dbReference type="PDBsum" id="1SEV"/>
<dbReference type="PDBsum" id="1SMK"/>
<dbReference type="SMR" id="P19446"/>
<dbReference type="EnsemblPlants" id="Cla97C01G017230.1">
    <property type="protein sequence ID" value="Cla97C01G017230.1"/>
    <property type="gene ID" value="Cla97C01G017230"/>
</dbReference>
<dbReference type="Gramene" id="Cla97C01G017230.1">
    <property type="protein sequence ID" value="Cla97C01G017230.1"/>
    <property type="gene ID" value="Cla97C01G017230"/>
</dbReference>
<dbReference type="EvolutionaryTrace" id="P19446"/>
<dbReference type="GO" id="GO:0009507">
    <property type="term" value="C:chloroplast"/>
    <property type="evidence" value="ECO:0007669"/>
    <property type="project" value="TreeGrafter"/>
</dbReference>
<dbReference type="GO" id="GO:0009514">
    <property type="term" value="C:glyoxysome"/>
    <property type="evidence" value="ECO:0007669"/>
    <property type="project" value="UniProtKB-SubCell"/>
</dbReference>
<dbReference type="GO" id="GO:0030060">
    <property type="term" value="F:L-malate dehydrogenase (NAD+) activity"/>
    <property type="evidence" value="ECO:0007669"/>
    <property type="project" value="UniProtKB-EC"/>
</dbReference>
<dbReference type="GO" id="GO:0006097">
    <property type="term" value="P:glyoxylate cycle"/>
    <property type="evidence" value="ECO:0007669"/>
    <property type="project" value="UniProtKB-KW"/>
</dbReference>
<dbReference type="GO" id="GO:0006108">
    <property type="term" value="P:malate metabolic process"/>
    <property type="evidence" value="ECO:0007669"/>
    <property type="project" value="InterPro"/>
</dbReference>
<dbReference type="GO" id="GO:0006099">
    <property type="term" value="P:tricarboxylic acid cycle"/>
    <property type="evidence" value="ECO:0007669"/>
    <property type="project" value="UniProtKB-KW"/>
</dbReference>
<dbReference type="CDD" id="cd01337">
    <property type="entry name" value="MDH_glyoxysomal_mitochondrial"/>
    <property type="match status" value="1"/>
</dbReference>
<dbReference type="FunFam" id="3.40.50.720:FF:000013">
    <property type="entry name" value="Malate dehydrogenase"/>
    <property type="match status" value="1"/>
</dbReference>
<dbReference type="FunFam" id="3.90.110.10:FF:000001">
    <property type="entry name" value="Malate dehydrogenase"/>
    <property type="match status" value="1"/>
</dbReference>
<dbReference type="Gene3D" id="3.90.110.10">
    <property type="entry name" value="Lactate dehydrogenase/glycoside hydrolase, family 4, C-terminal"/>
    <property type="match status" value="1"/>
</dbReference>
<dbReference type="Gene3D" id="3.40.50.720">
    <property type="entry name" value="NAD(P)-binding Rossmann-like Domain"/>
    <property type="match status" value="1"/>
</dbReference>
<dbReference type="InterPro" id="IPR001557">
    <property type="entry name" value="L-lactate/malate_DH"/>
</dbReference>
<dbReference type="InterPro" id="IPR022383">
    <property type="entry name" value="Lactate/malate_DH_C"/>
</dbReference>
<dbReference type="InterPro" id="IPR001236">
    <property type="entry name" value="Lactate/malate_DH_N"/>
</dbReference>
<dbReference type="InterPro" id="IPR015955">
    <property type="entry name" value="Lactate_DH/Glyco_Ohase_4_C"/>
</dbReference>
<dbReference type="InterPro" id="IPR001252">
    <property type="entry name" value="Malate_DH_AS"/>
</dbReference>
<dbReference type="InterPro" id="IPR010097">
    <property type="entry name" value="Malate_DH_type1"/>
</dbReference>
<dbReference type="InterPro" id="IPR036291">
    <property type="entry name" value="NAD(P)-bd_dom_sf"/>
</dbReference>
<dbReference type="NCBIfam" id="TIGR01772">
    <property type="entry name" value="MDH_euk_gproteo"/>
    <property type="match status" value="1"/>
</dbReference>
<dbReference type="PANTHER" id="PTHR11540">
    <property type="entry name" value="MALATE AND LACTATE DEHYDROGENASE"/>
    <property type="match status" value="1"/>
</dbReference>
<dbReference type="PANTHER" id="PTHR11540:SF71">
    <property type="entry name" value="MALATE DEHYDROGENASE 1, PEROXISOMAL"/>
    <property type="match status" value="1"/>
</dbReference>
<dbReference type="Pfam" id="PF02866">
    <property type="entry name" value="Ldh_1_C"/>
    <property type="match status" value="1"/>
</dbReference>
<dbReference type="Pfam" id="PF00056">
    <property type="entry name" value="Ldh_1_N"/>
    <property type="match status" value="1"/>
</dbReference>
<dbReference type="PIRSF" id="PIRSF000102">
    <property type="entry name" value="Lac_mal_DH"/>
    <property type="match status" value="1"/>
</dbReference>
<dbReference type="SUPFAM" id="SSF56327">
    <property type="entry name" value="LDH C-terminal domain-like"/>
    <property type="match status" value="1"/>
</dbReference>
<dbReference type="SUPFAM" id="SSF51735">
    <property type="entry name" value="NAD(P)-binding Rossmann-fold domains"/>
    <property type="match status" value="1"/>
</dbReference>
<dbReference type="PROSITE" id="PS00068">
    <property type="entry name" value="MDH"/>
    <property type="match status" value="1"/>
</dbReference>
<proteinExistence type="evidence at protein level"/>
<organism>
    <name type="scientific">Citrullus lanatus</name>
    <name type="common">Watermelon</name>
    <name type="synonym">Citrullus vulgaris</name>
    <dbReference type="NCBI Taxonomy" id="3654"/>
    <lineage>
        <taxon>Eukaryota</taxon>
        <taxon>Viridiplantae</taxon>
        <taxon>Streptophyta</taxon>
        <taxon>Embryophyta</taxon>
        <taxon>Tracheophyta</taxon>
        <taxon>Spermatophyta</taxon>
        <taxon>Magnoliopsida</taxon>
        <taxon>eudicotyledons</taxon>
        <taxon>Gunneridae</taxon>
        <taxon>Pentapetalae</taxon>
        <taxon>rosids</taxon>
        <taxon>fabids</taxon>
        <taxon>Cucurbitales</taxon>
        <taxon>Cucurbitaceae</taxon>
        <taxon>Benincaseae</taxon>
        <taxon>Citrullus</taxon>
    </lineage>
</organism>
<feature type="transit peptide" description="Glyoxysome" evidence="3 4">
    <location>
        <begin position="1"/>
        <end position="36"/>
    </location>
</feature>
<feature type="chain" id="PRO_0000018638" description="Malate dehydrogenase, glyoxysomal">
    <location>
        <begin position="37"/>
        <end position="356"/>
    </location>
</feature>
<feature type="active site" description="Proton acceptor">
    <location>
        <position position="220"/>
    </location>
</feature>
<feature type="binding site" evidence="1">
    <location>
        <begin position="51"/>
        <end position="57"/>
    </location>
    <ligand>
        <name>NAD(+)</name>
        <dbReference type="ChEBI" id="CHEBI:57540"/>
    </ligand>
</feature>
<feature type="binding site" evidence="1">
    <location>
        <position position="77"/>
    </location>
    <ligand>
        <name>NAD(+)</name>
        <dbReference type="ChEBI" id="CHEBI:57540"/>
    </ligand>
</feature>
<feature type="binding site">
    <location>
        <position position="124"/>
    </location>
    <ligand>
        <name>substrate</name>
    </ligand>
</feature>
<feature type="binding site">
    <location>
        <position position="130"/>
    </location>
    <ligand>
        <name>substrate</name>
    </ligand>
</feature>
<feature type="binding site" evidence="1">
    <location>
        <position position="137"/>
    </location>
    <ligand>
        <name>NAD(+)</name>
        <dbReference type="ChEBI" id="CHEBI:57540"/>
    </ligand>
</feature>
<feature type="binding site" evidence="1">
    <location>
        <begin position="160"/>
        <end position="162"/>
    </location>
    <ligand>
        <name>NAD(+)</name>
        <dbReference type="ChEBI" id="CHEBI:57540"/>
    </ligand>
</feature>
<feature type="binding site">
    <location>
        <position position="162"/>
    </location>
    <ligand>
        <name>substrate</name>
    </ligand>
</feature>
<feature type="binding site">
    <location>
        <position position="196"/>
    </location>
    <ligand>
        <name>substrate</name>
    </ligand>
</feature>
<feature type="binding site" evidence="1">
    <location>
        <position position="271"/>
    </location>
    <ligand>
        <name>NAD(+)</name>
        <dbReference type="ChEBI" id="CHEBI:57540"/>
    </ligand>
</feature>
<feature type="strand" evidence="6">
    <location>
        <begin position="45"/>
        <end position="51"/>
    </location>
</feature>
<feature type="helix" evidence="6">
    <location>
        <begin position="57"/>
        <end position="66"/>
    </location>
</feature>
<feature type="strand" evidence="6">
    <location>
        <begin position="70"/>
        <end position="80"/>
    </location>
</feature>
<feature type="helix" evidence="6">
    <location>
        <begin position="81"/>
        <end position="89"/>
    </location>
</feature>
<feature type="strand" evidence="6">
    <location>
        <begin position="96"/>
        <end position="102"/>
    </location>
</feature>
<feature type="helix" evidence="6">
    <location>
        <begin position="103"/>
        <end position="110"/>
    </location>
</feature>
<feature type="strand" evidence="6">
    <location>
        <begin position="114"/>
        <end position="118"/>
    </location>
</feature>
<feature type="helix" evidence="6">
    <location>
        <begin position="132"/>
        <end position="151"/>
    </location>
</feature>
<feature type="strand" evidence="6">
    <location>
        <begin position="155"/>
        <end position="159"/>
    </location>
</feature>
<feature type="helix" evidence="6">
    <location>
        <begin position="164"/>
        <end position="178"/>
    </location>
</feature>
<feature type="strand" evidence="6">
    <location>
        <begin position="185"/>
        <end position="188"/>
    </location>
</feature>
<feature type="helix" evidence="6">
    <location>
        <begin position="191"/>
        <end position="205"/>
    </location>
</feature>
<feature type="helix" evidence="6">
    <location>
        <begin position="209"/>
        <end position="211"/>
    </location>
</feature>
<feature type="strand" evidence="6">
    <location>
        <begin position="216"/>
        <end position="218"/>
    </location>
</feature>
<feature type="helix" evidence="6">
    <location>
        <begin position="222"/>
        <end position="224"/>
    </location>
</feature>
<feature type="strand" evidence="6">
    <location>
        <begin position="225"/>
        <end position="227"/>
    </location>
</feature>
<feature type="helix" evidence="6">
    <location>
        <begin position="229"/>
        <end position="231"/>
    </location>
</feature>
<feature type="helix" evidence="6">
    <location>
        <begin position="240"/>
        <end position="260"/>
    </location>
</feature>
<feature type="turn" evidence="6">
    <location>
        <begin position="261"/>
        <end position="263"/>
    </location>
</feature>
<feature type="helix" evidence="6">
    <location>
        <begin position="269"/>
        <end position="287"/>
    </location>
</feature>
<feature type="strand" evidence="6">
    <location>
        <begin position="292"/>
        <end position="299"/>
    </location>
</feature>
<feature type="strand" evidence="6">
    <location>
        <begin position="302"/>
        <end position="315"/>
    </location>
</feature>
<feature type="strand" evidence="6">
    <location>
        <begin position="318"/>
        <end position="322"/>
    </location>
</feature>
<feature type="helix" evidence="6">
    <location>
        <begin position="330"/>
        <end position="354"/>
    </location>
</feature>
<name>MDHG_CITLA</name>
<accession>P19446</accession>
<keyword id="KW-0002">3D-structure</keyword>
<keyword id="KW-0903">Direct protein sequencing</keyword>
<keyword id="KW-0329">Glyoxylate bypass</keyword>
<keyword id="KW-0330">Glyoxysome</keyword>
<keyword id="KW-0520">NAD</keyword>
<keyword id="KW-0560">Oxidoreductase</keyword>
<keyword id="KW-0576">Peroxisome</keyword>
<keyword id="KW-0809">Transit peptide</keyword>
<keyword id="KW-0816">Tricarboxylic acid cycle</keyword>